<gene>
    <name type="primary">SULT1A3</name>
    <name type="synonym">STM</name>
</gene>
<reference key="1">
    <citation type="journal article" date="1993" name="Biochem. Biophys. Res. Commun.">
        <title>Identification of two human brain aryl sulfotransferase cDNAs.</title>
        <authorList>
            <person name="Zhu X."/>
            <person name="Veronese M.E."/>
            <person name="Bernard C.C."/>
            <person name="Sansom L.N."/>
            <person name="McManus M.E."/>
        </authorList>
    </citation>
    <scope>NUCLEOTIDE SEQUENCE [MRNA] (ISOFORM 1)</scope>
    <source>
        <tissue>Brain</tissue>
    </source>
</reference>
<reference key="2">
    <citation type="journal article" date="1994" name="Mol. Cell. Endocrinol.">
        <title>Cloning and expression of cDNA encoding human placental estrogen sulfotransferase.</title>
        <authorList>
            <person name="Bernier F."/>
            <person name="Lopez-Solache I."/>
            <person name="Labrie F."/>
            <person name="Luu-The V."/>
        </authorList>
    </citation>
    <scope>NUCLEOTIDE SEQUENCE [MRNA] (ISOFORM 1)</scope>
    <source>
        <tissue>Placenta</tissue>
    </source>
</reference>
<reference key="3">
    <citation type="journal article" date="1994" name="Biochem. Biophys. Res. Commun.">
        <title>Genomic organization and DNA sequence of the human catecholamine-sulfating phenol sulfotransferase gene (STM).</title>
        <authorList>
            <person name="Dooley T.P."/>
            <person name="Probst P."/>
            <person name="Munroe P.B."/>
            <person name="Mole S.E."/>
            <person name="Liu Z."/>
            <person name="Doggett N.A."/>
        </authorList>
    </citation>
    <scope>NUCLEOTIDE SEQUENCE [GENOMIC DNA] (ISOFORM 1)</scope>
</reference>
<reference key="4">
    <citation type="journal article" date="1994" name="Biochem. Biophys. Res. Commun.">
        <title>Human liver thermolabile phenol sulfotransferase: cDNA cloning, expression and characterization.</title>
        <authorList>
            <person name="Wood T.C."/>
            <person name="Aksoy I.A."/>
            <person name="Aksoy S."/>
            <person name="Weinshilboum R.M."/>
        </authorList>
    </citation>
    <scope>NUCLEOTIDE SEQUENCE [MRNA]</scope>
    <scope>PROTEIN SEQUENCE OF 84-101</scope>
    <scope>TISSUE SPECIFICITY</scope>
    <source>
        <tissue>Liver</tissue>
    </source>
</reference>
<reference key="5">
    <citation type="journal article" date="1995" name="Biochem. Biophys. Res. Commun.">
        <title>Human thermolabile phenol sulfotransferase gene (STM): molecular cloning and structural characterization.</title>
        <authorList>
            <person name="Aksoy I.A."/>
            <person name="Weinshilboum R.M."/>
        </authorList>
    </citation>
    <scope>NUCLEOTIDE SEQUENCE [GENOMIC DNA] (ISOFORM 1)</scope>
    <source>
        <tissue>Platelet</tissue>
    </source>
</reference>
<reference key="6">
    <citation type="journal article" date="1995" name="Biochem. Biophys. Res. Commun.">
        <title>Human platelet phenolsulfotransferases: cDNA cloning, stable expression in V79 cells and identification of a novel allelic variant of the phenol-sulfating form.</title>
        <authorList>
            <person name="Jones A.L."/>
            <person name="Hagen M."/>
            <person name="Coughtrie M.W.H."/>
            <person name="Roberts R.C."/>
            <person name="Glatt H."/>
        </authorList>
    </citation>
    <scope>NUCLEOTIDE SEQUENCE [MRNA] (ISOFORM 1)</scope>
    <source>
        <tissue>Blood</tissue>
    </source>
</reference>
<reference key="7">
    <citation type="journal article" date="1994" name="J. Biol. Chem.">
        <title>Structure of human estrogen and aryl sulfotransferase gene. Two mRNA species issued from a single gene.</title>
        <authorList>
            <person name="Bernier F."/>
            <person name="Leblanc G."/>
            <person name="Labrie F."/>
            <person name="Luu-The V."/>
        </authorList>
    </citation>
    <scope>NUCLEOTIDE SEQUENCE [GENOMIC DNA] (ISOFORM 1)</scope>
    <source>
        <tissue>Leukocyte</tissue>
    </source>
</reference>
<reference key="8">
    <citation type="submission" date="1995-08" db="EMBL/GenBank/DDBJ databases">
        <authorList>
            <person name="Gaedigk A."/>
            <person name="Grant D.M."/>
        </authorList>
    </citation>
    <scope>NUCLEOTIDE SEQUENCE [MRNA] (ISOFORM 1)</scope>
    <source>
        <tissue>Liver</tissue>
    </source>
</reference>
<reference key="9">
    <citation type="submission" date="2003-05" db="EMBL/GenBank/DDBJ databases">
        <title>Isolation of seven variants of catecholamine sulfotransferase cDNAs from human kidney.</title>
        <authorList>
            <person name="Terazawa R."/>
            <person name="Shimada M."/>
            <person name="Nagata K."/>
            <person name="Yamazoe Y."/>
        </authorList>
    </citation>
    <scope>NUCLEOTIDE SEQUENCE [MRNA] (ISOFORM 3)</scope>
    <source>
        <tissue>Kidney</tissue>
    </source>
</reference>
<reference key="10">
    <citation type="journal article" date="2004" name="Nat. Genet.">
        <title>Complete sequencing and characterization of 21,243 full-length human cDNAs.</title>
        <authorList>
            <person name="Ota T."/>
            <person name="Suzuki Y."/>
            <person name="Nishikawa T."/>
            <person name="Otsuki T."/>
            <person name="Sugiyama T."/>
            <person name="Irie R."/>
            <person name="Wakamatsu A."/>
            <person name="Hayashi K."/>
            <person name="Sato H."/>
            <person name="Nagai K."/>
            <person name="Kimura K."/>
            <person name="Makita H."/>
            <person name="Sekine M."/>
            <person name="Obayashi M."/>
            <person name="Nishi T."/>
            <person name="Shibahara T."/>
            <person name="Tanaka T."/>
            <person name="Ishii S."/>
            <person name="Yamamoto J."/>
            <person name="Saito K."/>
            <person name="Kawai Y."/>
            <person name="Isono Y."/>
            <person name="Nakamura Y."/>
            <person name="Nagahari K."/>
            <person name="Murakami K."/>
            <person name="Yasuda T."/>
            <person name="Iwayanagi T."/>
            <person name="Wagatsuma M."/>
            <person name="Shiratori A."/>
            <person name="Sudo H."/>
            <person name="Hosoiri T."/>
            <person name="Kaku Y."/>
            <person name="Kodaira H."/>
            <person name="Kondo H."/>
            <person name="Sugawara M."/>
            <person name="Takahashi M."/>
            <person name="Kanda K."/>
            <person name="Yokoi T."/>
            <person name="Furuya T."/>
            <person name="Kikkawa E."/>
            <person name="Omura Y."/>
            <person name="Abe K."/>
            <person name="Kamihara K."/>
            <person name="Katsuta N."/>
            <person name="Sato K."/>
            <person name="Tanikawa M."/>
            <person name="Yamazaki M."/>
            <person name="Ninomiya K."/>
            <person name="Ishibashi T."/>
            <person name="Yamashita H."/>
            <person name="Murakawa K."/>
            <person name="Fujimori K."/>
            <person name="Tanai H."/>
            <person name="Kimata M."/>
            <person name="Watanabe M."/>
            <person name="Hiraoka S."/>
            <person name="Chiba Y."/>
            <person name="Ishida S."/>
            <person name="Ono Y."/>
            <person name="Takiguchi S."/>
            <person name="Watanabe S."/>
            <person name="Yosida M."/>
            <person name="Hotuta T."/>
            <person name="Kusano J."/>
            <person name="Kanehori K."/>
            <person name="Takahashi-Fujii A."/>
            <person name="Hara H."/>
            <person name="Tanase T.-O."/>
            <person name="Nomura Y."/>
            <person name="Togiya S."/>
            <person name="Komai F."/>
            <person name="Hara R."/>
            <person name="Takeuchi K."/>
            <person name="Arita M."/>
            <person name="Imose N."/>
            <person name="Musashino K."/>
            <person name="Yuuki H."/>
            <person name="Oshima A."/>
            <person name="Sasaki N."/>
            <person name="Aotsuka S."/>
            <person name="Yoshikawa Y."/>
            <person name="Matsunawa H."/>
            <person name="Ichihara T."/>
            <person name="Shiohata N."/>
            <person name="Sano S."/>
            <person name="Moriya S."/>
            <person name="Momiyama H."/>
            <person name="Satoh N."/>
            <person name="Takami S."/>
            <person name="Terashima Y."/>
            <person name="Suzuki O."/>
            <person name="Nakagawa S."/>
            <person name="Senoh A."/>
            <person name="Mizoguchi H."/>
            <person name="Goto Y."/>
            <person name="Shimizu F."/>
            <person name="Wakebe H."/>
            <person name="Hishigaki H."/>
            <person name="Watanabe T."/>
            <person name="Sugiyama A."/>
            <person name="Takemoto M."/>
            <person name="Kawakami B."/>
            <person name="Yamazaki M."/>
            <person name="Watanabe K."/>
            <person name="Kumagai A."/>
            <person name="Itakura S."/>
            <person name="Fukuzumi Y."/>
            <person name="Fujimori Y."/>
            <person name="Komiyama M."/>
            <person name="Tashiro H."/>
            <person name="Tanigami A."/>
            <person name="Fujiwara T."/>
            <person name="Ono T."/>
            <person name="Yamada K."/>
            <person name="Fujii Y."/>
            <person name="Ozaki K."/>
            <person name="Hirao M."/>
            <person name="Ohmori Y."/>
            <person name="Kawabata A."/>
            <person name="Hikiji T."/>
            <person name="Kobatake N."/>
            <person name="Inagaki H."/>
            <person name="Ikema Y."/>
            <person name="Okamoto S."/>
            <person name="Okitani R."/>
            <person name="Kawakami T."/>
            <person name="Noguchi S."/>
            <person name="Itoh T."/>
            <person name="Shigeta K."/>
            <person name="Senba T."/>
            <person name="Matsumura K."/>
            <person name="Nakajima Y."/>
            <person name="Mizuno T."/>
            <person name="Morinaga M."/>
            <person name="Sasaki M."/>
            <person name="Togashi T."/>
            <person name="Oyama M."/>
            <person name="Hata H."/>
            <person name="Watanabe M."/>
            <person name="Komatsu T."/>
            <person name="Mizushima-Sugano J."/>
            <person name="Satoh T."/>
            <person name="Shirai Y."/>
            <person name="Takahashi Y."/>
            <person name="Nakagawa K."/>
            <person name="Okumura K."/>
            <person name="Nagase T."/>
            <person name="Nomura N."/>
            <person name="Kikuchi H."/>
            <person name="Masuho Y."/>
            <person name="Yamashita R."/>
            <person name="Nakai K."/>
            <person name="Yada T."/>
            <person name="Nakamura Y."/>
            <person name="Ohara O."/>
            <person name="Isogai T."/>
            <person name="Sugano S."/>
        </authorList>
    </citation>
    <scope>NUCLEOTIDE SEQUENCE [LARGE SCALE MRNA] (ISOFORM 2)</scope>
    <source>
        <tissue>Lung</tissue>
    </source>
</reference>
<reference key="11">
    <citation type="journal article" date="2004" name="Nature">
        <title>The sequence and analysis of duplication-rich human chromosome 16.</title>
        <authorList>
            <person name="Martin J."/>
            <person name="Han C."/>
            <person name="Gordon L.A."/>
            <person name="Terry A."/>
            <person name="Prabhakar S."/>
            <person name="She X."/>
            <person name="Xie G."/>
            <person name="Hellsten U."/>
            <person name="Chan Y.M."/>
            <person name="Altherr M."/>
            <person name="Couronne O."/>
            <person name="Aerts A."/>
            <person name="Bajorek E."/>
            <person name="Black S."/>
            <person name="Blumer H."/>
            <person name="Branscomb E."/>
            <person name="Brown N.C."/>
            <person name="Bruno W.J."/>
            <person name="Buckingham J.M."/>
            <person name="Callen D.F."/>
            <person name="Campbell C.S."/>
            <person name="Campbell M.L."/>
            <person name="Campbell E.W."/>
            <person name="Caoile C."/>
            <person name="Challacombe J.F."/>
            <person name="Chasteen L.A."/>
            <person name="Chertkov O."/>
            <person name="Chi H.C."/>
            <person name="Christensen M."/>
            <person name="Clark L.M."/>
            <person name="Cohn J.D."/>
            <person name="Denys M."/>
            <person name="Detter J.C."/>
            <person name="Dickson M."/>
            <person name="Dimitrijevic-Bussod M."/>
            <person name="Escobar J."/>
            <person name="Fawcett J.J."/>
            <person name="Flowers D."/>
            <person name="Fotopulos D."/>
            <person name="Glavina T."/>
            <person name="Gomez M."/>
            <person name="Gonzales E."/>
            <person name="Goodstein D."/>
            <person name="Goodwin L.A."/>
            <person name="Grady D.L."/>
            <person name="Grigoriev I."/>
            <person name="Groza M."/>
            <person name="Hammon N."/>
            <person name="Hawkins T."/>
            <person name="Haydu L."/>
            <person name="Hildebrand C.E."/>
            <person name="Huang W."/>
            <person name="Israni S."/>
            <person name="Jett J."/>
            <person name="Jewett P.B."/>
            <person name="Kadner K."/>
            <person name="Kimball H."/>
            <person name="Kobayashi A."/>
            <person name="Krawczyk M.-C."/>
            <person name="Leyba T."/>
            <person name="Longmire J.L."/>
            <person name="Lopez F."/>
            <person name="Lou Y."/>
            <person name="Lowry S."/>
            <person name="Ludeman T."/>
            <person name="Manohar C.F."/>
            <person name="Mark G.A."/>
            <person name="McMurray K.L."/>
            <person name="Meincke L.J."/>
            <person name="Morgan J."/>
            <person name="Moyzis R.K."/>
            <person name="Mundt M.O."/>
            <person name="Munk A.C."/>
            <person name="Nandkeshwar R.D."/>
            <person name="Pitluck S."/>
            <person name="Pollard M."/>
            <person name="Predki P."/>
            <person name="Parson-Quintana B."/>
            <person name="Ramirez L."/>
            <person name="Rash S."/>
            <person name="Retterer J."/>
            <person name="Ricke D.O."/>
            <person name="Robinson D.L."/>
            <person name="Rodriguez A."/>
            <person name="Salamov A."/>
            <person name="Saunders E.H."/>
            <person name="Scott D."/>
            <person name="Shough T."/>
            <person name="Stallings R.L."/>
            <person name="Stalvey M."/>
            <person name="Sutherland R.D."/>
            <person name="Tapia R."/>
            <person name="Tesmer J.G."/>
            <person name="Thayer N."/>
            <person name="Thompson L.S."/>
            <person name="Tice H."/>
            <person name="Torney D.C."/>
            <person name="Tran-Gyamfi M."/>
            <person name="Tsai M."/>
            <person name="Ulanovsky L.E."/>
            <person name="Ustaszewska A."/>
            <person name="Vo N."/>
            <person name="White P.S."/>
            <person name="Williams A.L."/>
            <person name="Wills P.L."/>
            <person name="Wu J.-R."/>
            <person name="Wu K."/>
            <person name="Yang J."/>
            <person name="DeJong P."/>
            <person name="Bruce D."/>
            <person name="Doggett N.A."/>
            <person name="Deaven L."/>
            <person name="Schmutz J."/>
            <person name="Grimwood J."/>
            <person name="Richardson P."/>
            <person name="Rokhsar D.S."/>
            <person name="Eichler E.E."/>
            <person name="Gilna P."/>
            <person name="Lucas S.M."/>
            <person name="Myers R.M."/>
            <person name="Rubin E.M."/>
            <person name="Pennacchio L.A."/>
        </authorList>
    </citation>
    <scope>NUCLEOTIDE SEQUENCE [LARGE SCALE GENOMIC DNA]</scope>
</reference>
<reference key="12">
    <citation type="journal article" date="2004" name="Genome Res.">
        <title>The status, quality, and expansion of the NIH full-length cDNA project: the Mammalian Gene Collection (MGC).</title>
        <authorList>
            <consortium name="The MGC Project Team"/>
        </authorList>
    </citation>
    <scope>NUCLEOTIDE SEQUENCE [LARGE SCALE MRNA] (ISOFORM 1)</scope>
    <source>
        <tissue>Lung</tissue>
        <tissue>Pancreas</tissue>
    </source>
</reference>
<reference key="13">
    <citation type="journal article" date="1994" name="Genomics">
        <title>Thermolabile phenol sulfotransferase gene (STM): localization to human chromosome 16p11.2.</title>
        <authorList>
            <person name="Aksoy I.A."/>
            <person name="Callen D.F."/>
            <person name="Apostolou S."/>
            <person name="Her C."/>
            <person name="Weinshilboum R.M."/>
        </authorList>
    </citation>
    <scope>NUCLEOTIDE SEQUENCE [GENOMIC DNA] OF 139-198</scope>
    <source>
        <tissue>Lymphocyte</tissue>
    </source>
</reference>
<reference key="14">
    <citation type="journal article" date="1994" name="Biochem. J.">
        <title>Functional characterization of two human sulphotransferase cDNAs that encode monoamine- and phenol-sulphating forms of phenol sulphotransferase: substrate kinetics, thermal-stability and inhibitor-sensitivity studies.</title>
        <authorList>
            <person name="Veronese M.E."/>
            <person name="Burgess W."/>
            <person name="Zhu X."/>
            <person name="McManus M.E."/>
        </authorList>
    </citation>
    <scope>FUNCTION</scope>
    <scope>CATALYTIC ACTIVITY</scope>
    <scope>SUBCELLULAR LOCATION</scope>
    <scope>BIOPHYSICOCHEMICAL PROPERTIES</scope>
</reference>
<reference key="15">
    <citation type="journal article" date="1999" name="J. Clin. Endocrinol. Metab.">
        <title>Characterization of human iodothyronine sulfotransferases.</title>
        <authorList>
            <person name="Kester M.H."/>
            <person name="Kaptein E."/>
            <person name="Roest T.J."/>
            <person name="van Dijk C.H."/>
            <person name="Tibboel D."/>
            <person name="Meinl W."/>
            <person name="Glatt H."/>
            <person name="Coughtrie M.W."/>
            <person name="Visser T.J."/>
        </authorList>
    </citation>
    <scope>CATALYTIC ACTIVITY</scope>
    <scope>FUNCTION</scope>
    <scope>BIOPHYSICOCHEMICAL PROPERTIES</scope>
</reference>
<reference key="16">
    <citation type="journal article" date="2011" name="BMC Syst. Biol.">
        <title>Initial characterization of the human central proteome.</title>
        <authorList>
            <person name="Burkard T.R."/>
            <person name="Planyavsky M."/>
            <person name="Kaupe I."/>
            <person name="Breitwieser F.P."/>
            <person name="Buerckstuemmer T."/>
            <person name="Bennett K.L."/>
            <person name="Superti-Furga G."/>
            <person name="Colinge J."/>
        </authorList>
    </citation>
    <scope>IDENTIFICATION BY MASS SPECTROMETRY [LARGE SCALE ANALYSIS]</scope>
</reference>
<reference key="17">
    <citation type="journal article" date="2018" name="Biochem. Pharmacol.">
        <title>Sulfation of catecholamines and serotonin by SULT1A3 allozymes.</title>
        <authorList>
            <person name="Bairam A.F."/>
            <person name="Rasool M.I."/>
            <person name="Alherz F.A."/>
            <person name="Abunnaja M.S."/>
            <person name="El Daibani A.A."/>
            <person name="Gohal S.A."/>
            <person name="Kurogi K."/>
            <person name="Sakakibara Y."/>
            <person name="Suiko M."/>
            <person name="Liu M.C."/>
        </authorList>
    </citation>
    <scope>FUNCTION</scope>
    <scope>CATALYTIC ACTIVITY</scope>
    <scope>BIOPHYSICOCHEMICAL PROPERTIES</scope>
    <scope>VARIANTS PRO-7; CYS-9; LEU-10; MET-15; PHE-18; LEU-101; HIS-101 AND CYS-144</scope>
    <scope>CHARACTERIZATION OF PRO-7; CYS-9; LEU-10; MET-15; PHE-18; LEU-19; LEU-101; HIS-101 AND CYS-144</scope>
    <scope>MUTAGENESIS OF ASN-235 AND SER-290</scope>
</reference>
<reference key="18">
    <citation type="journal article" date="1999" name="J. Mol. Biol.">
        <title>Crystal structure of human catecholamine sulfotransferase.</title>
        <authorList>
            <person name="Bidwell L.M."/>
            <person name="McManus M.E."/>
            <person name="Gaedigk A."/>
            <person name="Kakuta Y."/>
            <person name="Negishi M."/>
            <person name="Pedersen L."/>
            <person name="Martin J.L."/>
        </authorList>
    </citation>
    <scope>X-RAY CRYSTALLOGRAPHY (2.4 ANGSTROMS)</scope>
    <scope>ACTIVE SITE</scope>
    <source>
        <tissue>Brain</tissue>
    </source>
</reference>
<reference key="19">
    <citation type="journal article" date="2005" name="Biochem. Biophys. Res. Commun.">
        <title>Crystal structure of human sulfotransferase SULT1A3 in complex with dopamine and 3'-phosphoadenosine 5'-phosphate.</title>
        <authorList>
            <person name="Lu J.H."/>
            <person name="Li H.T."/>
            <person name="Liu M.C."/>
            <person name="Zhang J.P."/>
            <person name="Li M."/>
            <person name="An X.M."/>
            <person name="Chang W.R."/>
        </authorList>
    </citation>
    <scope>X-RAY CRYSTALLOGRAPHY (2.60 ANGSTROMS) IN COMPLEX WITH ADENOSINE-3'-5'-DIPHOSPHATE AND L-DOPAMINE</scope>
    <scope>3'-PHOSPHOADENYLYL SULFATE AND DOPAMINE BINDING SITES</scope>
</reference>
<reference key="20">
    <citation type="journal article" date="2003" name="J. Neurochem.">
        <title>Human catecholamine sulfotransferase (SULT1A3) pharmacogenetics: functional genetic polymorphism.</title>
        <authorList>
            <person name="Thomae B.A."/>
            <person name="Rifki O.F."/>
            <person name="Theobald M.A."/>
            <person name="Eckloff B.W."/>
            <person name="Wieben E.D."/>
            <person name="Weinshilboum R.M."/>
        </authorList>
    </citation>
    <scope>VARIANT ASN-234</scope>
    <scope>CHARACTERIZATION OF VARIANT ASN-234</scope>
    <scope>FUNCTION</scope>
    <scope>CATALYTIC ACTIVITY</scope>
    <scope>BIOPHYSICOCHEMICAL PROPERTIES</scope>
</reference>
<reference key="21">
    <citation type="journal article" date="2004" name="Biochem. Biophys. Res. Commun.">
        <title>Human SULT1A3 pharmacogenetics: gene duplication and functional genomic studies.</title>
        <authorList>
            <person name="Hildebrandt M.A.T."/>
            <person name="Salavaggione O.E."/>
            <person name="Martin Y.N."/>
            <person name="Flynn H.C."/>
            <person name="Jalal S."/>
            <person name="Wieben E.D."/>
            <person name="Weinshilboum R.M."/>
        </authorList>
    </citation>
    <scope>VARIANTS LEU-101; HIS-101 AND CYS-144</scope>
    <scope>FUNCTION</scope>
    <scope>CHARACTERIZATION OF VARIANTS LEU-101; HIS-101 AND CYS-144</scope>
    <scope>CATALYTIC ACTIVITY</scope>
    <scope>BIOPHYSICOCHEMICAL PROPERTIES</scope>
    <scope>CAUTION</scope>
</reference>
<protein>
    <recommendedName>
        <fullName>Sulfotransferase 1A3</fullName>
        <shortName>ST1A3</shortName>
        <ecNumber evidence="6">2.8.2.1</ecNumber>
    </recommendedName>
    <alternativeName>
        <fullName>Aryl sulfotransferase 1A3/1A4</fullName>
    </alternativeName>
    <alternativeName>
        <fullName>Catecholamine-sulfating phenol sulfotransferase</fullName>
    </alternativeName>
    <alternativeName>
        <fullName>HAST3</fullName>
    </alternativeName>
    <alternativeName>
        <fullName>M-PST</fullName>
    </alternativeName>
    <alternativeName>
        <fullName>Monoamine-sulfating phenol sulfotransferase</fullName>
    </alternativeName>
    <alternativeName>
        <fullName>Placental estrogen sulfotransferase</fullName>
    </alternativeName>
    <alternativeName>
        <fullName>Sulfotransferase 1A3/1A4</fullName>
    </alternativeName>
    <alternativeName>
        <fullName>Sulfotransferase, monoamine-preferring</fullName>
    </alternativeName>
    <alternativeName>
        <fullName>Thermolabile phenol sulfotransferase</fullName>
        <shortName>TL-PST</shortName>
    </alternativeName>
</protein>
<name>ST1A3_HUMAN</name>
<accession>P0DMM9</accession>
<accession>B4DNV0</accession>
<accession>O95603</accession>
<accession>P50224</accession>
<accession>Q1ET66</accession>
<accession>Q6ZWJ5</accession>
<keyword id="KW-0002">3D-structure</keyword>
<keyword id="KW-0025">Alternative splicing</keyword>
<keyword id="KW-0128">Catecholamine metabolism</keyword>
<keyword id="KW-0963">Cytoplasm</keyword>
<keyword id="KW-0903">Direct protein sequencing</keyword>
<keyword id="KW-0443">Lipid metabolism</keyword>
<keyword id="KW-1185">Reference proteome</keyword>
<keyword id="KW-0753">Steroid metabolism</keyword>
<keyword id="KW-0808">Transferase</keyword>
<feature type="chain" id="PRO_0000085159" description="Sulfotransferase 1A3">
    <location>
        <begin position="1"/>
        <end position="295"/>
    </location>
</feature>
<feature type="active site" description="Proton acceptor" evidence="12">
    <location>
        <position position="108"/>
    </location>
</feature>
<feature type="binding site" evidence="4 16">
    <location>
        <begin position="48"/>
        <end position="53"/>
    </location>
    <ligand>
        <name>3'-phosphoadenylyl sulfate</name>
        <dbReference type="ChEBI" id="CHEBI:58339"/>
    </ligand>
</feature>
<feature type="binding site" evidence="4 16">
    <location>
        <position position="86"/>
    </location>
    <ligand>
        <name>dopamine</name>
        <dbReference type="ChEBI" id="CHEBI:59905"/>
    </ligand>
</feature>
<feature type="binding site" evidence="4 16">
    <location>
        <begin position="106"/>
        <end position="108"/>
    </location>
    <ligand>
        <name>dopamine</name>
        <dbReference type="ChEBI" id="CHEBI:59905"/>
    </ligand>
</feature>
<feature type="binding site" evidence="4 16">
    <location>
        <position position="130"/>
    </location>
    <ligand>
        <name>3'-phosphoadenylyl sulfate</name>
        <dbReference type="ChEBI" id="CHEBI:58339"/>
    </ligand>
</feature>
<feature type="binding site" evidence="4 16">
    <location>
        <position position="138"/>
    </location>
    <ligand>
        <name>3'-phosphoadenylyl sulfate</name>
        <dbReference type="ChEBI" id="CHEBI:58339"/>
    </ligand>
</feature>
<feature type="binding site" evidence="4 16">
    <location>
        <position position="146"/>
    </location>
    <ligand>
        <name>dopamine</name>
        <dbReference type="ChEBI" id="CHEBI:59905"/>
    </ligand>
</feature>
<feature type="binding site" evidence="4 16">
    <location>
        <position position="193"/>
    </location>
    <ligand>
        <name>3'-phosphoadenylyl sulfate</name>
        <dbReference type="ChEBI" id="CHEBI:58339"/>
    </ligand>
</feature>
<feature type="binding site" evidence="4 16">
    <location>
        <begin position="227"/>
        <end position="232"/>
    </location>
    <ligand>
        <name>3'-phosphoadenylyl sulfate</name>
        <dbReference type="ChEBI" id="CHEBI:58339"/>
    </ligand>
</feature>
<feature type="binding site" evidence="4 16">
    <location>
        <begin position="257"/>
        <end position="259"/>
    </location>
    <ligand>
        <name>3'-phosphoadenylyl sulfate</name>
        <dbReference type="ChEBI" id="CHEBI:58339"/>
    </ligand>
</feature>
<feature type="splice variant" id="VSP_012326" description="In isoform 2." evidence="8">
    <original>VSYGSWYQHVQEWWELSRTHPVLYLFYEDMKENPKREIQKILEFVGRSLPEETMDFMVQHTSFKEMKKNPMTNYTTVPQELMDHSISPFMRKGMAGDWKTTFTVAQNERFDADYAEKMAGCSLSFRSEL</original>
    <variation>GGLDWRKEGVKPRGGGYNVQQPCVGAPCPLL</variation>
    <location>
        <begin position="167"/>
        <end position="295"/>
    </location>
</feature>
<feature type="splice variant" id="VSP_047771" description="In isoform 3." evidence="9">
    <original>E</original>
    <variation>EEPSAAQ</variation>
    <location>
        <position position="198"/>
    </location>
</feature>
<feature type="sequence variant" id="VAR_090291" description="No significant effect on KM and Vmax for dopamine, (R)-adrenaline, (R)-noradrenaline and serotonin." evidence="5">
    <original>T</original>
    <variation>P</variation>
    <location>
        <position position="7"/>
    </location>
</feature>
<feature type="sequence variant" id="VAR_090292" description="No significant effect on KM and Vmax for dopamine, (R)adrenaline, (R)-noradrenaline and serotonin." evidence="5">
    <original>S</original>
    <variation>P</variation>
    <location>
        <position position="8"/>
    </location>
</feature>
<feature type="sequence variant" id="VAR_090293" description="9.5-fold increase in KM value for (R)-noradrenaline; 3-fold increase in KM value for serotonin." evidence="5">
    <original>R</original>
    <variation>C</variation>
    <location>
        <position position="9"/>
    </location>
</feature>
<feature type="sequence variant" id="VAR_090294" description="No significant effect on KM and Vmax for dopamine, (R)-adrenaline, (R)-noradrenaline and serotonin." evidence="5">
    <original>P</original>
    <variation>L</variation>
    <location>
        <position position="10"/>
    </location>
</feature>
<feature type="sequence variant" id="VAR_090295" description="No significant effect on KM and Vmax for dopamine, (R)-adrenaline, (R)-noradrenaline and serotonin." evidence="5">
    <original>V</original>
    <variation>M</variation>
    <location>
        <position position="15"/>
    </location>
</feature>
<feature type="sequence variant" id="VAR_090296" description="No significant effect on KM and Vmax for dopamine, (R)-adrenaline, (R)-noradrenaline and serotonin." evidence="5">
    <original>V</original>
    <variation>F</variation>
    <location>
        <position position="18"/>
    </location>
</feature>
<feature type="sequence variant" id="VAR_071108" description="Decreases levels of sulfotransferase activity; 2-fold increase in KM for dopamine; dbSNP:rs751527244." evidence="3 5">
    <original>P</original>
    <variation>H</variation>
    <location>
        <position position="101"/>
    </location>
</feature>
<feature type="sequence variant" id="VAR_071109" description="Decreases levels of sulfotransferase activity; 3-fold increase in KM for serotonin; dbSNP:rs751527244." evidence="3 5">
    <original>P</original>
    <variation>L</variation>
    <location>
        <position position="101"/>
    </location>
</feature>
<feature type="sequence variant" id="VAR_071110" description="No effect on sulfotransferase activity; 2-fold increase in KM for dopamine; 4-fold increase in KM for serotonin; dbSNP:rs1293732453." evidence="3 5">
    <original>R</original>
    <variation>C</variation>
    <location>
        <position position="144"/>
    </location>
</feature>
<feature type="sequence variant" id="VAR_071111" description="Decreases levels of sulfotransferase activity; accelerates proteasome-dependent degradation; 1.5-fold decrease in VMAX for dopamine; dbSNP:rs1328799050." evidence="2 5">
    <original>K</original>
    <variation>N</variation>
    <location>
        <position position="234"/>
    </location>
</feature>
<feature type="mutagenesis site" description="A 5-fold increase in KM and 3-fold decrease in VMAX for (R)-noradrenaline. A 100-fold increase in KM and a 3-fold increase in VMAX for serotonin. A 20-fold increase in KM for (R)-adrenaline. A 2-fold increase in KM for dopamine." evidence="5">
    <original>N</original>
    <variation>T</variation>
    <location>
        <position position="235"/>
    </location>
</feature>
<feature type="mutagenesis site" description="A 2-fold increase in KM for serotonin." evidence="5">
    <original>S</original>
    <variation>T</variation>
    <location>
        <position position="290"/>
    </location>
</feature>
<feature type="sequence conflict" description="In Ref. 8; AAC99987." evidence="10" ref="8">
    <original>MDFMVQ</original>
    <variation>VDLMVE</variation>
    <location>
        <begin position="220"/>
        <end position="225"/>
    </location>
</feature>
<feature type="sequence conflict" description="In Ref. 8; AAC99987." evidence="10" ref="8">
    <original>N</original>
    <variation>T</variation>
    <location>
        <position position="235"/>
    </location>
</feature>
<feature type="sequence conflict" description="In Ref. 8; AAC99987." evidence="10" ref="8">
    <original>PQ</original>
    <variation>RR</variation>
    <location>
        <begin position="244"/>
        <end position="245"/>
    </location>
</feature>
<feature type="sequence conflict" description="In Ref. 8; AAC99987." evidence="10" ref="8">
    <original>S</original>
    <variation>T</variation>
    <location>
        <position position="290"/>
    </location>
</feature>
<feature type="strand" evidence="17">
    <location>
        <begin position="12"/>
        <end position="15"/>
    </location>
</feature>
<feature type="strand" evidence="17">
    <location>
        <begin position="18"/>
        <end position="21"/>
    </location>
</feature>
<feature type="helix" evidence="17">
    <location>
        <begin position="22"/>
        <end position="27"/>
    </location>
</feature>
<feature type="helix" evidence="17">
    <location>
        <begin position="30"/>
        <end position="33"/>
    </location>
</feature>
<feature type="strand" evidence="17">
    <location>
        <begin position="41"/>
        <end position="45"/>
    </location>
</feature>
<feature type="helix" evidence="17">
    <location>
        <begin position="51"/>
        <end position="62"/>
    </location>
</feature>
<feature type="turn" evidence="18">
    <location>
        <begin position="63"/>
        <end position="65"/>
    </location>
</feature>
<feature type="helix" evidence="18">
    <location>
        <begin position="67"/>
        <end position="70"/>
    </location>
</feature>
<feature type="helix" evidence="18">
    <location>
        <begin position="75"/>
        <end position="78"/>
    </location>
</feature>
<feature type="turn" evidence="17">
    <location>
        <begin position="95"/>
        <end position="98"/>
    </location>
</feature>
<feature type="strand" evidence="17">
    <location>
        <begin position="104"/>
        <end position="107"/>
    </location>
</feature>
<feature type="helix" evidence="17">
    <location>
        <begin position="111"/>
        <end position="113"/>
    </location>
</feature>
<feature type="helix" evidence="17">
    <location>
        <begin position="116"/>
        <end position="120"/>
    </location>
</feature>
<feature type="strand" evidence="17">
    <location>
        <begin position="124"/>
        <end position="129"/>
    </location>
</feature>
<feature type="helix" evidence="17">
    <location>
        <begin position="132"/>
        <end position="145"/>
    </location>
</feature>
<feature type="helix" evidence="17">
    <location>
        <begin position="155"/>
        <end position="163"/>
    </location>
</feature>
<feature type="helix" evidence="17">
    <location>
        <begin position="172"/>
        <end position="182"/>
    </location>
</feature>
<feature type="turn" evidence="17">
    <location>
        <begin position="183"/>
        <end position="185"/>
    </location>
</feature>
<feature type="strand" evidence="17">
    <location>
        <begin position="188"/>
        <end position="192"/>
    </location>
</feature>
<feature type="helix" evidence="17">
    <location>
        <begin position="193"/>
        <end position="198"/>
    </location>
</feature>
<feature type="helix" evidence="17">
    <location>
        <begin position="200"/>
        <end position="211"/>
    </location>
</feature>
<feature type="helix" evidence="18">
    <location>
        <begin position="217"/>
        <end position="226"/>
    </location>
</feature>
<feature type="helix" evidence="18">
    <location>
        <begin position="229"/>
        <end position="234"/>
    </location>
</feature>
<feature type="turn" evidence="18">
    <location>
        <begin position="236"/>
        <end position="238"/>
    </location>
</feature>
<feature type="turn" evidence="18">
    <location>
        <begin position="245"/>
        <end position="247"/>
    </location>
</feature>
<feature type="turn" evidence="18">
    <location>
        <begin position="250"/>
        <end position="252"/>
    </location>
</feature>
<feature type="helix" evidence="17">
    <location>
        <begin position="264"/>
        <end position="266"/>
    </location>
</feature>
<feature type="helix" evidence="17">
    <location>
        <begin position="270"/>
        <end position="283"/>
    </location>
</feature>
<dbReference type="EC" id="2.8.2.1" evidence="6"/>
<dbReference type="EMBL" id="L19956">
    <property type="protein sequence ID" value="AAA02943.1"/>
    <property type="molecule type" value="mRNA"/>
</dbReference>
<dbReference type="EMBL" id="L25275">
    <property type="protein sequence ID" value="AAA36523.1"/>
    <property type="molecule type" value="mRNA"/>
</dbReference>
<dbReference type="EMBL" id="L19956">
    <property type="protein sequence ID" value="AAA17723.1"/>
    <property type="molecule type" value="mRNA"/>
</dbReference>
<dbReference type="EMBL" id="U20499">
    <property type="protein sequence ID" value="AAA64490.1"/>
    <property type="molecule type" value="Genomic_DNA"/>
</dbReference>
<dbReference type="EMBL" id="X84653">
    <property type="protein sequence ID" value="CAA59146.1"/>
    <property type="molecule type" value="mRNA"/>
</dbReference>
<dbReference type="EMBL" id="L34160">
    <property type="status" value="NOT_ANNOTATED_CDS"/>
    <property type="molecule type" value="Genomic_DNA"/>
</dbReference>
<dbReference type="EMBL" id="U37686">
    <property type="protein sequence ID" value="AAA86536.1"/>
    <property type="molecule type" value="Genomic_DNA"/>
</dbReference>
<dbReference type="EMBL" id="U34199">
    <property type="protein sequence ID" value="AAC99987.1"/>
    <property type="molecule type" value="mRNA"/>
</dbReference>
<dbReference type="EMBL" id="AK122733">
    <property type="protein sequence ID" value="BAC85507.1"/>
    <property type="status" value="ALT_FRAME"/>
    <property type="molecule type" value="mRNA"/>
</dbReference>
<dbReference type="EMBL" id="AK298073">
    <property type="protein sequence ID" value="BAG60362.1"/>
    <property type="molecule type" value="mRNA"/>
</dbReference>
<dbReference type="EMBL" id="AC106782">
    <property type="status" value="NOT_ANNOTATED_CDS"/>
    <property type="molecule type" value="Genomic_DNA"/>
</dbReference>
<dbReference type="EMBL" id="AC133555">
    <property type="status" value="NOT_ANNOTATED_CDS"/>
    <property type="molecule type" value="Genomic_DNA"/>
</dbReference>
<dbReference type="EMBL" id="AB111094">
    <property type="protein sequence ID" value="BAE94928.1"/>
    <property type="molecule type" value="mRNA"/>
</dbReference>
<dbReference type="EMBL" id="BC014471">
    <property type="protein sequence ID" value="AAH14471.1"/>
    <property type="molecule type" value="mRNA"/>
</dbReference>
<dbReference type="EMBL" id="BC078144">
    <property type="protein sequence ID" value="AAH78144.1"/>
    <property type="molecule type" value="mRNA"/>
</dbReference>
<dbReference type="EMBL" id="U08099">
    <property type="protein sequence ID" value="AAA82126.1"/>
    <property type="molecule type" value="Genomic_DNA"/>
</dbReference>
<dbReference type="CCDS" id="CCDS10674.1">
    <molecule id="P0DMM9-1"/>
</dbReference>
<dbReference type="CCDS" id="CCDS32427.1">
    <molecule id="P0DMM9-1"/>
</dbReference>
<dbReference type="PIR" id="A55451">
    <property type="entry name" value="A55451"/>
</dbReference>
<dbReference type="RefSeq" id="NP_001017390.1">
    <molecule id="P0DMM9-1"/>
    <property type="nucleotide sequence ID" value="NM_001017390.2"/>
</dbReference>
<dbReference type="RefSeq" id="NP_808220.1">
    <molecule id="P0DMM9-1"/>
    <property type="nucleotide sequence ID" value="NM_177552.4"/>
</dbReference>
<dbReference type="RefSeq" id="XP_011506903.1">
    <property type="nucleotide sequence ID" value="XM_011508601.1"/>
</dbReference>
<dbReference type="RefSeq" id="XP_016855108.1">
    <property type="nucleotide sequence ID" value="XM_016999619.1"/>
</dbReference>
<dbReference type="PDB" id="1CJM">
    <property type="method" value="X-ray"/>
    <property type="resolution" value="2.40 A"/>
    <property type="chains" value="A=1-295"/>
</dbReference>
<dbReference type="PDB" id="2A3R">
    <property type="method" value="X-ray"/>
    <property type="resolution" value="2.60 A"/>
    <property type="chains" value="A/B=1-295"/>
</dbReference>
<dbReference type="PDBsum" id="1CJM"/>
<dbReference type="PDBsum" id="2A3R"/>
<dbReference type="SMR" id="P0DMM9"/>
<dbReference type="BioGRID" id="112687">
    <property type="interactions" value="31"/>
</dbReference>
<dbReference type="BioGRID" id="138644">
    <property type="interactions" value="13"/>
</dbReference>
<dbReference type="FunCoup" id="P0DMM9">
    <property type="interactions" value="218"/>
</dbReference>
<dbReference type="STRING" id="9606.ENSP00000353600"/>
<dbReference type="ChEMBL" id="CHEMBL1743293"/>
<dbReference type="DrugBank" id="DB00316">
    <property type="generic name" value="Acetaminophen"/>
</dbReference>
<dbReference type="DrugBank" id="DB00714">
    <property type="generic name" value="Apomorphine"/>
</dbReference>
<dbReference type="DrugBank" id="DB14635">
    <property type="generic name" value="Curcumin sulfate"/>
</dbReference>
<dbReference type="DrugBank" id="DB12243">
    <property type="generic name" value="Edaravone"/>
</dbReference>
<dbReference type="DrugBank" id="DB00977">
    <property type="generic name" value="Ethinylestradiol"/>
</dbReference>
<dbReference type="DrugBank" id="DB12471">
    <property type="generic name" value="Ibrexafungerp"/>
</dbReference>
<dbReference type="DrugBank" id="DB00968">
    <property type="generic name" value="Methyldopa"/>
</dbReference>
<dbReference type="DrugBank" id="DB00388">
    <property type="generic name" value="Phenylephrine"/>
</dbReference>
<dbReference type="DrugBank" id="DB00960">
    <property type="generic name" value="Pindolol"/>
</dbReference>
<dbReference type="DrugBank" id="DB09288">
    <property type="generic name" value="Propacetamol"/>
</dbReference>
<dbReference type="DrugBank" id="DB00867">
    <property type="generic name" value="Ritodrine"/>
</dbReference>
<dbReference type="DrugBank" id="DB00871">
    <property type="generic name" value="Terbutaline"/>
</dbReference>
<dbReference type="DrugBank" id="DB09100">
    <property type="generic name" value="Thyroid, porcine"/>
</dbReference>
<dbReference type="GlyGen" id="P0DMM9">
    <property type="glycosylation" value="1 site, 1 O-linked glycan (1 site)"/>
</dbReference>
<dbReference type="iPTMnet" id="P0DMM9"/>
<dbReference type="PhosphoSitePlus" id="P0DMM9"/>
<dbReference type="BioMuta" id="SULT1A3"/>
<dbReference type="jPOST" id="P0DMM9"/>
<dbReference type="MassIVE" id="P0DMM9"/>
<dbReference type="PaxDb" id="9606-ENSP00000347739"/>
<dbReference type="PeptideAtlas" id="P0DMM9"/>
<dbReference type="Pumba" id="P0DMM9"/>
<dbReference type="TopDownProteomics" id="P0DMM9-2">
    <molecule id="P0DMM9-2"/>
</dbReference>
<dbReference type="Antibodypedia" id="57796">
    <property type="antibodies" value="260 antibodies from 21 providers"/>
</dbReference>
<dbReference type="DNASU" id="6818"/>
<dbReference type="Ensembl" id="ENST00000338971.10">
    <molecule id="P0DMM9-1"/>
    <property type="protein sequence ID" value="ENSP00000343645.6"/>
    <property type="gene ID" value="ENSG00000261052.6"/>
</dbReference>
<dbReference type="Ensembl" id="ENST00000395138.6">
    <molecule id="P0DMM9-1"/>
    <property type="protein sequence ID" value="ENSP00000378570.2"/>
    <property type="gene ID" value="ENSG00000261052.6"/>
</dbReference>
<dbReference type="Ensembl" id="ENST00000563322.5">
    <molecule id="P0DMM9-3"/>
    <property type="protein sequence ID" value="ENSP00000454518.1"/>
    <property type="gene ID" value="ENSG00000261052.6"/>
</dbReference>
<dbReference type="GeneID" id="445329"/>
<dbReference type="GeneID" id="6818"/>
<dbReference type="KEGG" id="hsa:445329"/>
<dbReference type="KEGG" id="hsa:6818"/>
<dbReference type="MANE-Select" id="ENST00000338971.10">
    <property type="protein sequence ID" value="ENSP00000343645.6"/>
    <property type="RefSeq nucleotide sequence ID" value="NM_177552.4"/>
    <property type="RefSeq protein sequence ID" value="NP_808220.1"/>
</dbReference>
<dbReference type="UCSC" id="uc010bzt.4">
    <molecule id="P0DMM9-1"/>
    <property type="organism name" value="human"/>
</dbReference>
<dbReference type="AGR" id="HGNC:11455"/>
<dbReference type="AGR" id="HGNC:30004"/>
<dbReference type="CTD" id="445329"/>
<dbReference type="CTD" id="6818"/>
<dbReference type="DisGeNET" id="445329"/>
<dbReference type="DisGeNET" id="6818"/>
<dbReference type="GeneCards" id="SULT1A3"/>
<dbReference type="HGNC" id="HGNC:11455">
    <property type="gene designation" value="SULT1A3"/>
</dbReference>
<dbReference type="HPA" id="ENSG00000261052">
    <property type="expression patterns" value="Tissue enriched (intestine)"/>
</dbReference>
<dbReference type="MIM" id="600641">
    <property type="type" value="gene"/>
</dbReference>
<dbReference type="neXtProt" id="NX_P0DMM9"/>
<dbReference type="OpenTargets" id="ENSG00000261052"/>
<dbReference type="VEuPathDB" id="HostDB:ENSG00000261052"/>
<dbReference type="eggNOG" id="KOG1584">
    <property type="taxonomic scope" value="Eukaryota"/>
</dbReference>
<dbReference type="GeneTree" id="ENSGT00940000164316"/>
<dbReference type="HOGENOM" id="CLU_027239_1_2_1"/>
<dbReference type="InParanoid" id="P0DMM9"/>
<dbReference type="OMA" id="WHFINGM"/>
<dbReference type="OrthoDB" id="9519140at2759"/>
<dbReference type="PAN-GO" id="P0DMM9">
    <property type="GO annotations" value="3 GO annotations based on evolutionary models"/>
</dbReference>
<dbReference type="PhylomeDB" id="P0DMM9"/>
<dbReference type="BioCyc" id="MetaCyc:HS05608-MONOMER"/>
<dbReference type="BRENDA" id="2.8.2.1">
    <property type="organism ID" value="2681"/>
</dbReference>
<dbReference type="PathwayCommons" id="P0DMM9"/>
<dbReference type="Reactome" id="R-HSA-156584">
    <property type="pathway name" value="Cytosolic sulfonation of small molecules"/>
</dbReference>
<dbReference type="Reactome" id="R-HSA-381038">
    <property type="pathway name" value="XBP1(S) activates chaperone genes"/>
</dbReference>
<dbReference type="Reactome" id="R-HSA-9753281">
    <property type="pathway name" value="Paracetamol ADME"/>
</dbReference>
<dbReference type="SABIO-RK" id="P0DMM9"/>
<dbReference type="SignaLink" id="P0DMM9"/>
<dbReference type="BioGRID-ORCS" id="445329">
    <property type="hits" value="18 hits in 631 CRISPR screens"/>
</dbReference>
<dbReference type="BioGRID-ORCS" id="6818">
    <property type="hits" value="19 hits in 323 CRISPR screens"/>
</dbReference>
<dbReference type="EvolutionaryTrace" id="P0DMM9"/>
<dbReference type="Pharos" id="P0DMM9">
    <property type="development level" value="Tbio"/>
</dbReference>
<dbReference type="PRO" id="PR:P0DMM9"/>
<dbReference type="Proteomes" id="UP000005640">
    <property type="component" value="Chromosome 16"/>
</dbReference>
<dbReference type="RNAct" id="P0DMM9">
    <property type="molecule type" value="protein"/>
</dbReference>
<dbReference type="Bgee" id="ENSG00000261052">
    <property type="expression patterns" value="Expressed in duodenum and 93 other cell types or tissues"/>
</dbReference>
<dbReference type="ExpressionAtlas" id="P0DMM9">
    <property type="expression patterns" value="baseline and differential"/>
</dbReference>
<dbReference type="GO" id="GO:0005737">
    <property type="term" value="C:cytoplasm"/>
    <property type="evidence" value="ECO:0000318"/>
    <property type="project" value="GO_Central"/>
</dbReference>
<dbReference type="GO" id="GO:0005829">
    <property type="term" value="C:cytosol"/>
    <property type="evidence" value="ECO:0000304"/>
    <property type="project" value="Reactome"/>
</dbReference>
<dbReference type="GO" id="GO:0047685">
    <property type="term" value="F:amine sulfotransferase activity"/>
    <property type="evidence" value="ECO:0000314"/>
    <property type="project" value="CAFA"/>
</dbReference>
<dbReference type="GO" id="GO:0004062">
    <property type="term" value="F:aryl sulfotransferase activity"/>
    <property type="evidence" value="ECO:0000314"/>
    <property type="project" value="UniProtKB"/>
</dbReference>
<dbReference type="GO" id="GO:0043199">
    <property type="term" value="F:sulfate binding"/>
    <property type="evidence" value="ECO:0000314"/>
    <property type="project" value="CAFA"/>
</dbReference>
<dbReference type="GO" id="GO:0008146">
    <property type="term" value="F:sulfotransferase activity"/>
    <property type="evidence" value="ECO:0000314"/>
    <property type="project" value="UniProtKB"/>
</dbReference>
<dbReference type="GO" id="GO:0050427">
    <property type="term" value="P:3'-phosphoadenosine 5'-phosphosulfate metabolic process"/>
    <property type="evidence" value="ECO:0000314"/>
    <property type="project" value="CAFA"/>
</dbReference>
<dbReference type="GO" id="GO:1903351">
    <property type="term" value="P:cellular response to dopamine"/>
    <property type="evidence" value="ECO:0000315"/>
    <property type="project" value="CAFA"/>
</dbReference>
<dbReference type="GO" id="GO:0042420">
    <property type="term" value="P:dopamine catabolic process"/>
    <property type="evidence" value="ECO:0000314"/>
    <property type="project" value="UniProtKB"/>
</dbReference>
<dbReference type="GO" id="GO:0042417">
    <property type="term" value="P:dopamine metabolic process"/>
    <property type="evidence" value="ECO:0000314"/>
    <property type="project" value="UniProtKB"/>
</dbReference>
<dbReference type="GO" id="GO:0042414">
    <property type="term" value="P:epinephrine metabolic process"/>
    <property type="evidence" value="ECO:0000314"/>
    <property type="project" value="UniProtKB"/>
</dbReference>
<dbReference type="GO" id="GO:0006068">
    <property type="term" value="P:ethanol catabolic process"/>
    <property type="evidence" value="ECO:0000314"/>
    <property type="project" value="CAFA"/>
</dbReference>
<dbReference type="GO" id="GO:0009812">
    <property type="term" value="P:flavonoid metabolic process"/>
    <property type="evidence" value="ECO:0000314"/>
    <property type="project" value="BHF-UCL"/>
</dbReference>
<dbReference type="GO" id="GO:0042415">
    <property type="term" value="P:norepinephrine metabolic process"/>
    <property type="evidence" value="ECO:0000314"/>
    <property type="project" value="UniProtKB"/>
</dbReference>
<dbReference type="GO" id="GO:0042428">
    <property type="term" value="P:serotonin metabolic process"/>
    <property type="evidence" value="ECO:0000314"/>
    <property type="project" value="UniProtKB"/>
</dbReference>
<dbReference type="GO" id="GO:0008202">
    <property type="term" value="P:steroid metabolic process"/>
    <property type="evidence" value="ECO:0007669"/>
    <property type="project" value="UniProtKB-KW"/>
</dbReference>
<dbReference type="GO" id="GO:0051923">
    <property type="term" value="P:sulfation"/>
    <property type="evidence" value="ECO:0000314"/>
    <property type="project" value="UniProtKB"/>
</dbReference>
<dbReference type="GO" id="GO:0042403">
    <property type="term" value="P:thyroid hormone metabolic process"/>
    <property type="evidence" value="ECO:0000314"/>
    <property type="project" value="UniProtKB"/>
</dbReference>
<dbReference type="GO" id="GO:0006805">
    <property type="term" value="P:xenobiotic metabolic process"/>
    <property type="evidence" value="ECO:0000314"/>
    <property type="project" value="BHF-UCL"/>
</dbReference>
<dbReference type="DisProt" id="DP00011"/>
<dbReference type="FunFam" id="3.40.50.300:FF:000433">
    <property type="entry name" value="Estrogen sulfotransferase"/>
    <property type="match status" value="1"/>
</dbReference>
<dbReference type="Gene3D" id="3.40.50.300">
    <property type="entry name" value="P-loop containing nucleotide triphosphate hydrolases"/>
    <property type="match status" value="1"/>
</dbReference>
<dbReference type="InterPro" id="IPR027417">
    <property type="entry name" value="P-loop_NTPase"/>
</dbReference>
<dbReference type="InterPro" id="IPR000863">
    <property type="entry name" value="Sulfotransferase_dom"/>
</dbReference>
<dbReference type="PANTHER" id="PTHR11783">
    <property type="entry name" value="SULFOTRANSFERASE SULT"/>
    <property type="match status" value="1"/>
</dbReference>
<dbReference type="Pfam" id="PF00685">
    <property type="entry name" value="Sulfotransfer_1"/>
    <property type="match status" value="1"/>
</dbReference>
<dbReference type="SUPFAM" id="SSF52540">
    <property type="entry name" value="P-loop containing nucleoside triphosphate hydrolases"/>
    <property type="match status" value="1"/>
</dbReference>
<evidence type="ECO:0000269" key="1">
    <source>
    </source>
</evidence>
<evidence type="ECO:0000269" key="2">
    <source>
    </source>
</evidence>
<evidence type="ECO:0000269" key="3">
    <source>
    </source>
</evidence>
<evidence type="ECO:0000269" key="4">
    <source>
    </source>
</evidence>
<evidence type="ECO:0000269" key="5">
    <source>
    </source>
</evidence>
<evidence type="ECO:0000269" key="6">
    <source>
    </source>
</evidence>
<evidence type="ECO:0000269" key="7">
    <source>
    </source>
</evidence>
<evidence type="ECO:0000303" key="8">
    <source>
    </source>
</evidence>
<evidence type="ECO:0000303" key="9">
    <source ref="9"/>
</evidence>
<evidence type="ECO:0000305" key="10"/>
<evidence type="ECO:0000305" key="11">
    <source>
    </source>
</evidence>
<evidence type="ECO:0000305" key="12">
    <source>
    </source>
</evidence>
<evidence type="ECO:0000305" key="13">
    <source>
    </source>
</evidence>
<evidence type="ECO:0000305" key="14">
    <source>
    </source>
</evidence>
<evidence type="ECO:0000305" key="15">
    <source>
    </source>
</evidence>
<evidence type="ECO:0007744" key="16">
    <source>
        <dbReference type="PDB" id="2A3R"/>
    </source>
</evidence>
<evidence type="ECO:0007829" key="17">
    <source>
        <dbReference type="PDB" id="1CJM"/>
    </source>
</evidence>
<evidence type="ECO:0007829" key="18">
    <source>
        <dbReference type="PDB" id="2A3R"/>
    </source>
</evidence>
<sequence length="295" mass="34196">MELIQDTSRPPLEYVKGVPLIKYFAEALGPLQSFQARPDDLLINTYPKSGTTWVSQILDMIYQGGDLEKCNRAPIYVRVPFLEVNDPGEPSGLETLKDTPPPRLIKSHLPLALLPQTLLDQKVKVVYVARNPKDVAVSYYHFHRMEKAHPEPGTWDSFLEKFMAGEVSYGSWYQHVQEWWELSRTHPVLYLFYEDMKENPKREIQKILEFVGRSLPEETMDFMVQHTSFKEMKKNPMTNYTTVPQELMDHSISPFMRKGMAGDWKTTFTVAQNERFDADYAEKMAGCSLSFRSEL</sequence>
<organism>
    <name type="scientific">Homo sapiens</name>
    <name type="common">Human</name>
    <dbReference type="NCBI Taxonomy" id="9606"/>
    <lineage>
        <taxon>Eukaryota</taxon>
        <taxon>Metazoa</taxon>
        <taxon>Chordata</taxon>
        <taxon>Craniata</taxon>
        <taxon>Vertebrata</taxon>
        <taxon>Euteleostomi</taxon>
        <taxon>Mammalia</taxon>
        <taxon>Eutheria</taxon>
        <taxon>Euarchontoglires</taxon>
        <taxon>Primates</taxon>
        <taxon>Haplorrhini</taxon>
        <taxon>Catarrhini</taxon>
        <taxon>Hominidae</taxon>
        <taxon>Homo</taxon>
    </lineage>
</organism>
<comment type="function">
    <text evidence="1 2 3 5 6">Sulfotransferase that utilizes 3'-phospho-5'-adenylyl sulfate (PAPS) as sulfonate donor to catalyze the sulfate conjugation of phenolic monoamines (neurotransmitters such as dopamine, (R)-adrenaline/epinephrine, (R)-noradrenaline/norepinephrine and serotonin) and phenolic and catechol drugs (PubMed:8093002, PubMed:29524394, PubMed:14622112, PubMed:15358107). Catalyzes the sulfation of T4 (L-thyroxine/3,5,3',5'-tetraiodothyronine), T3 (3,5,3'-triiodothyronine), rT3 (3,3',5'-triiodothyronine) and 3,3'-T2 (3,3'-diiodothyronine), with a substrate preference of 3,3'-T2 &gt; rT3 &gt; T3 &gt; T4 (PubMed:10199779).</text>
</comment>
<comment type="catalytic activity">
    <reaction evidence="6">
        <text>a phenol + 3'-phosphoadenylyl sulfate = an aryl sulfate + adenosine 3',5'-bisphosphate + H(+)</text>
        <dbReference type="Rhea" id="RHEA:12164"/>
        <dbReference type="ChEBI" id="CHEBI:15378"/>
        <dbReference type="ChEBI" id="CHEBI:33853"/>
        <dbReference type="ChEBI" id="CHEBI:58339"/>
        <dbReference type="ChEBI" id="CHEBI:58343"/>
        <dbReference type="ChEBI" id="CHEBI:140317"/>
        <dbReference type="EC" id="2.8.2.1"/>
    </reaction>
</comment>
<comment type="catalytic activity">
    <reaction evidence="6">
        <text>4-nitrophenol + 3'-phosphoadenylyl sulfate = 4-nitrophenyl sulfate + adenosine 3',5'-bisphosphate</text>
        <dbReference type="Rhea" id="RHEA:66548"/>
        <dbReference type="ChEBI" id="CHEBI:57917"/>
        <dbReference type="ChEBI" id="CHEBI:58339"/>
        <dbReference type="ChEBI" id="CHEBI:58343"/>
        <dbReference type="ChEBI" id="CHEBI:140994"/>
    </reaction>
    <physiologicalReaction direction="left-to-right" evidence="15">
        <dbReference type="Rhea" id="RHEA:66549"/>
    </physiologicalReaction>
</comment>
<comment type="catalytic activity">
    <reaction evidence="2 3 5 6">
        <text>dopamine + 3'-phosphoadenylyl sulfate = dopamine 3-O-sulfate + adenosine 3',5'-bisphosphate + H(+)</text>
        <dbReference type="Rhea" id="RHEA:67880"/>
        <dbReference type="ChEBI" id="CHEBI:15378"/>
        <dbReference type="ChEBI" id="CHEBI:58339"/>
        <dbReference type="ChEBI" id="CHEBI:58343"/>
        <dbReference type="ChEBI" id="CHEBI:59905"/>
        <dbReference type="ChEBI" id="CHEBI:133524"/>
    </reaction>
    <physiologicalReaction direction="left-to-right" evidence="13">
        <dbReference type="Rhea" id="RHEA:67881"/>
    </physiologicalReaction>
</comment>
<comment type="catalytic activity">
    <reaction evidence="2 3 5 6">
        <text>dopamine + 3'-phosphoadenylyl sulfate = dopamine 4-O-sulfate + adenosine 3',5'-bisphosphate + H(+)</text>
        <dbReference type="Rhea" id="RHEA:67884"/>
        <dbReference type="ChEBI" id="CHEBI:15378"/>
        <dbReference type="ChEBI" id="CHEBI:58339"/>
        <dbReference type="ChEBI" id="CHEBI:58343"/>
        <dbReference type="ChEBI" id="CHEBI:59905"/>
        <dbReference type="ChEBI" id="CHEBI:133529"/>
    </reaction>
    <physiologicalReaction direction="left-to-right" evidence="13">
        <dbReference type="Rhea" id="RHEA:67885"/>
    </physiologicalReaction>
</comment>
<comment type="catalytic activity">
    <reaction evidence="5">
        <text>serotonin + 3'-phosphoadenylyl sulfate = serotonin O-sulfate + adenosine 3',5'-bisphosphate + H(+)</text>
        <dbReference type="Rhea" id="RHEA:83339"/>
        <dbReference type="ChEBI" id="CHEBI:15378"/>
        <dbReference type="ChEBI" id="CHEBI:58339"/>
        <dbReference type="ChEBI" id="CHEBI:58343"/>
        <dbReference type="ChEBI" id="CHEBI:233042"/>
        <dbReference type="ChEBI" id="CHEBI:350546"/>
    </reaction>
    <physiologicalReaction direction="left-to-right" evidence="14">
        <dbReference type="Rhea" id="RHEA:83340"/>
    </physiologicalReaction>
</comment>
<comment type="catalytic activity">
    <reaction evidence="5">
        <text>(R)-adrenaline + 3'-phosphoadenylyl sulfate = (R)-adrenaline 4'-O-sulfate + adenosine 3',5'-bisphosphate + H(+)</text>
        <dbReference type="Rhea" id="RHEA:83343"/>
        <dbReference type="ChEBI" id="CHEBI:15378"/>
        <dbReference type="ChEBI" id="CHEBI:58339"/>
        <dbReference type="ChEBI" id="CHEBI:58343"/>
        <dbReference type="ChEBI" id="CHEBI:71406"/>
        <dbReference type="ChEBI" id="CHEBI:233043"/>
    </reaction>
    <physiologicalReaction direction="left-to-right" evidence="14">
        <dbReference type="Rhea" id="RHEA:83344"/>
    </physiologicalReaction>
</comment>
<comment type="catalytic activity">
    <reaction evidence="5">
        <text>(R)-noradrenaline + 3'-phosphoadenylyl sulfate = (R)-noradrenaline 4'-O-sulfate + adenosine 3',5'-bisphosphate + H(+)</text>
        <dbReference type="Rhea" id="RHEA:83351"/>
        <dbReference type="ChEBI" id="CHEBI:15378"/>
        <dbReference type="ChEBI" id="CHEBI:58339"/>
        <dbReference type="ChEBI" id="CHEBI:58343"/>
        <dbReference type="ChEBI" id="CHEBI:72587"/>
        <dbReference type="ChEBI" id="CHEBI:233044"/>
    </reaction>
    <physiologicalReaction direction="left-to-right" evidence="14">
        <dbReference type="Rhea" id="RHEA:83352"/>
    </physiologicalReaction>
</comment>
<comment type="catalytic activity">
    <reaction evidence="1">
        <text>3,3',5-triiodo-L-thyronine + 3'-phosphoadenylyl sulfate = 3,3',5-triiodo-L-thyronine sulfate + adenosine 3',5'-bisphosphate + H(+)</text>
        <dbReference type="Rhea" id="RHEA:67876"/>
        <dbReference type="ChEBI" id="CHEBI:15378"/>
        <dbReference type="ChEBI" id="CHEBI:58339"/>
        <dbReference type="ChEBI" id="CHEBI:58343"/>
        <dbReference type="ChEBI" id="CHEBI:176511"/>
        <dbReference type="ChEBI" id="CHEBI:533015"/>
    </reaction>
    <physiologicalReaction direction="left-to-right" evidence="11">
        <dbReference type="Rhea" id="RHEA:67877"/>
    </physiologicalReaction>
</comment>
<comment type="catalytic activity">
    <reaction evidence="1">
        <text>3,3',5'-triiodo-L-thyronine + 3'-phosphoadenylyl sulfate = 3,3',5'-triiodo-L-thyronine sulfate + adenosine 3',5'-bisphosphate + H(+)</text>
        <dbReference type="Rhea" id="RHEA:67888"/>
        <dbReference type="ChEBI" id="CHEBI:15378"/>
        <dbReference type="ChEBI" id="CHEBI:57261"/>
        <dbReference type="ChEBI" id="CHEBI:58339"/>
        <dbReference type="ChEBI" id="CHEBI:58343"/>
        <dbReference type="ChEBI" id="CHEBI:176513"/>
    </reaction>
    <physiologicalReaction direction="left-to-right" evidence="11">
        <dbReference type="Rhea" id="RHEA:67889"/>
    </physiologicalReaction>
</comment>
<comment type="catalytic activity">
    <reaction evidence="1">
        <text>3,3'-diiodo-L-thyronine + 3'-phosphoadenylyl sulfate = 3,3'-diiodo-L-thyronine sulfate + adenosine 3',5'-bisphosphate + H(+)</text>
        <dbReference type="Rhea" id="RHEA:67892"/>
        <dbReference type="ChEBI" id="CHEBI:15378"/>
        <dbReference type="ChEBI" id="CHEBI:58339"/>
        <dbReference type="ChEBI" id="CHEBI:58343"/>
        <dbReference type="ChEBI" id="CHEBI:176514"/>
        <dbReference type="ChEBI" id="CHEBI:176515"/>
    </reaction>
    <physiologicalReaction direction="left-to-right" evidence="11">
        <dbReference type="Rhea" id="RHEA:67893"/>
    </physiologicalReaction>
</comment>
<comment type="catalytic activity">
    <reaction evidence="1">
        <text>L-thyroxine + 3'-phosphoadenylyl sulfate = L-thyroxine sulfate + adenosine 3',5'-bisphosphate + H(+)</text>
        <dbReference type="Rhea" id="RHEA:83575"/>
        <dbReference type="ChEBI" id="CHEBI:15378"/>
        <dbReference type="ChEBI" id="CHEBI:58339"/>
        <dbReference type="ChEBI" id="CHEBI:58343"/>
        <dbReference type="ChEBI" id="CHEBI:58448"/>
        <dbReference type="ChEBI" id="CHEBI:176512"/>
    </reaction>
    <physiologicalReaction direction="left-to-right" evidence="11">
        <dbReference type="Rhea" id="RHEA:83576"/>
    </physiologicalReaction>
</comment>
<comment type="biophysicochemical properties">
    <kinetics>
        <KM evidence="6">2200 uM for 4-nitrophenol</KM>
        <KM evidence="6">9.7 uM for dopamine</KM>
        <KM evidence="5">6.46 uM for dopamine</KM>
        <KM evidence="5">9.16 uM for (R)-adrenaline</KM>
        <KM evidence="5">10.65 uM for (R)-noradrenaline</KM>
        <KM evidence="5">71.38 uM for serotonin</KM>
        <KM evidence="2">10.5 uM for dopamine</KM>
        <KM evidence="3">8.3 uM for dopamine</KM>
        <KM evidence="2">0.114 uM for 3'-phosphoadenylyl sulfate</KM>
        <KM evidence="3">0.19 uM for 3'-phosphoadenylyl sulfate</KM>
        <KM evidence="1">31.2 uM for 3,3'-diiodothyronine</KM>
        <KM evidence="1">112 uM for 3,5,3'-triiodothyronine</KM>
        <KM evidence="1">2.7 uM for 3'-phosphoadenylyl sulfate</KM>
        <Vmax evidence="6">2.8 nmol/min/mg enzyme towards dopamine</Vmax>
        <Vmax evidence="5">40.82 nmol/min/mg enzyme towards dopamine</Vmax>
        <Vmax evidence="5">35.3 nmol/min/mg enzyme towards (R)-adrenaline</Vmax>
        <Vmax evidence="5">42.53 nmol/min/mg enzyme towards (R)-noradrenaline</Vmax>
        <Vmax evidence="5">38.99 nmol/min/mg enzyme towards serotonin</Vmax>
        <Vmax evidence="6">2.6 nmol/min/mg enzyme towards 4-nitrophenol</Vmax>
        <Vmax evidence="1">782.0 umol/min/mg enzyme towards 3,3'-diiodothyronine</Vmax>
        <Vmax evidence="1">158.0 umol/min/mg enzyme towards with 3,5,3'-triiodothyronine</Vmax>
        <Vmax evidence="1">4.9 umol/min/mg enzyme towards 3'-phosphoadenylyl sulfate</Vmax>
    </kinetics>
</comment>
<comment type="subunit">
    <text evidence="4">Homodimer.</text>
</comment>
<comment type="subcellular location">
    <subcellularLocation>
        <location evidence="6">Cytoplasm</location>
    </subcellularLocation>
</comment>
<comment type="alternative products">
    <event type="alternative splicing"/>
    <isoform>
        <id>P0DMM9-1</id>
        <name>1</name>
        <sequence type="displayed"/>
    </isoform>
    <isoform>
        <id>P0DMM9-2</id>
        <name>2</name>
        <sequence type="described" ref="VSP_012326"/>
    </isoform>
    <isoform>
        <id>P0DMM9-3</id>
        <name>3</name>
        <sequence type="described" ref="VSP_047771"/>
    </isoform>
</comment>
<comment type="tissue specificity">
    <text evidence="7">Liver, colon, kidney, lung, brain, spleen, small intestine, placenta and leukocyte.</text>
</comment>
<comment type="PTM">
    <text>The N-terminus is blocked.</text>
</comment>
<comment type="similarity">
    <text evidence="10">Belongs to the sulfotransferase 1 family.</text>
</comment>
<comment type="caution">
    <text evidence="13">Found in a segmental duplication on p arm of chromosome 16 giving rise to two identical copies of this gene sharing exons with SLX1A and SLX1B. The ORFs of SULT1A3 and SULT1A4 differ with only a single nucleotide change that does not alter the encoded amino acid. It is not possible to determine whether any individual polymorphism is present within SULT1A3 or SULT1A4 (PubMed:15358107).</text>
</comment>
<comment type="sequence caution" evidence="10">
    <molecule>Isoform 2</molecule>
    <conflict type="frameshift">
        <sequence resource="EMBL-CDS" id="BAC85507"/>
    </conflict>
</comment>
<proteinExistence type="evidence at protein level"/>